<dbReference type="EC" id="2.7.8.8"/>
<dbReference type="EMBL" id="AP003347">
    <property type="protein sequence ID" value="BAD82153.1"/>
    <property type="status" value="ALT_SEQ"/>
    <property type="molecule type" value="Genomic_DNA"/>
</dbReference>
<dbReference type="EMBL" id="AP008207">
    <property type="protein sequence ID" value="BAH91236.1"/>
    <property type="status" value="ALT_SEQ"/>
    <property type="molecule type" value="Genomic_DNA"/>
</dbReference>
<dbReference type="EMBL" id="AP014957">
    <property type="status" value="NOT_ANNOTATED_CDS"/>
    <property type="molecule type" value="Genomic_DNA"/>
</dbReference>
<dbReference type="SMR" id="Q5N8Q3"/>
<dbReference type="FunCoup" id="Q5N8Q3">
    <property type="interactions" value="535"/>
</dbReference>
<dbReference type="STRING" id="39947.Q5N8Q3"/>
<dbReference type="PaxDb" id="39947-Q5N8Q3"/>
<dbReference type="KEGG" id="dosa:Os01g0683500"/>
<dbReference type="InParanoid" id="Q5N8Q3"/>
<dbReference type="PlantReactome" id="R-OSA-1119402">
    <property type="pathway name" value="Phospholipid biosynthesis I"/>
</dbReference>
<dbReference type="UniPathway" id="UPA00558">
    <property type="reaction ID" value="UER00615"/>
</dbReference>
<dbReference type="Proteomes" id="UP000000763">
    <property type="component" value="Chromosome 1"/>
</dbReference>
<dbReference type="Proteomes" id="UP000059680">
    <property type="component" value="Chromosome 1"/>
</dbReference>
<dbReference type="GO" id="GO:0005789">
    <property type="term" value="C:endoplasmic reticulum membrane"/>
    <property type="evidence" value="ECO:0007669"/>
    <property type="project" value="UniProtKB-SubCell"/>
</dbReference>
<dbReference type="GO" id="GO:0003882">
    <property type="term" value="F:CDP-diacylglycerol-serine O-phosphatidyltransferase activity"/>
    <property type="evidence" value="ECO:0007669"/>
    <property type="project" value="UniProtKB-EC"/>
</dbReference>
<dbReference type="GO" id="GO:0106245">
    <property type="term" value="F:L-serine-phosphatidylethanolamine phosphatidyltransferase activity"/>
    <property type="evidence" value="ECO:0007669"/>
    <property type="project" value="InterPro"/>
</dbReference>
<dbReference type="GO" id="GO:0006646">
    <property type="term" value="P:phosphatidylethanolamine biosynthetic process"/>
    <property type="evidence" value="ECO:0007669"/>
    <property type="project" value="UniProtKB-UniPathway"/>
</dbReference>
<dbReference type="GO" id="GO:0006659">
    <property type="term" value="P:phosphatidylserine biosynthetic process"/>
    <property type="evidence" value="ECO:0007669"/>
    <property type="project" value="InterPro"/>
</dbReference>
<dbReference type="InterPro" id="IPR004277">
    <property type="entry name" value="PSS"/>
</dbReference>
<dbReference type="PANTHER" id="PTHR15362:SF20">
    <property type="entry name" value="CDP-DIACYLGLYCEROL--SERINE O-PHOSPHATIDYLTRANSFERASE 3"/>
    <property type="match status" value="1"/>
</dbReference>
<dbReference type="PANTHER" id="PTHR15362">
    <property type="entry name" value="PHOSPHATIDYLINOSITOL SYNTHASE"/>
    <property type="match status" value="1"/>
</dbReference>
<dbReference type="Pfam" id="PF03034">
    <property type="entry name" value="PSS"/>
    <property type="match status" value="1"/>
</dbReference>
<name>PSS3_ORYSJ</name>
<gene>
    <name type="primary">PSS3</name>
    <name type="ordered locus">Os01g0683500/Os01g0683550</name>
    <name type="ordered locus">LOC_Os01g49024</name>
    <name type="ORF">P0445E10.10</name>
</gene>
<evidence type="ECO:0000250" key="1"/>
<evidence type="ECO:0000255" key="2"/>
<evidence type="ECO:0000256" key="3">
    <source>
        <dbReference type="SAM" id="MobiDB-lite"/>
    </source>
</evidence>
<evidence type="ECO:0000305" key="4"/>
<reference key="1">
    <citation type="journal article" date="2002" name="Nature">
        <title>The genome sequence and structure of rice chromosome 1.</title>
        <authorList>
            <person name="Sasaki T."/>
            <person name="Matsumoto T."/>
            <person name="Yamamoto K."/>
            <person name="Sakata K."/>
            <person name="Baba T."/>
            <person name="Katayose Y."/>
            <person name="Wu J."/>
            <person name="Niimura Y."/>
            <person name="Cheng Z."/>
            <person name="Nagamura Y."/>
            <person name="Antonio B.A."/>
            <person name="Kanamori H."/>
            <person name="Hosokawa S."/>
            <person name="Masukawa M."/>
            <person name="Arikawa K."/>
            <person name="Chiden Y."/>
            <person name="Hayashi M."/>
            <person name="Okamoto M."/>
            <person name="Ando T."/>
            <person name="Aoki H."/>
            <person name="Arita K."/>
            <person name="Hamada M."/>
            <person name="Harada C."/>
            <person name="Hijishita S."/>
            <person name="Honda M."/>
            <person name="Ichikawa Y."/>
            <person name="Idonuma A."/>
            <person name="Iijima M."/>
            <person name="Ikeda M."/>
            <person name="Ikeno M."/>
            <person name="Ito S."/>
            <person name="Ito T."/>
            <person name="Ito Y."/>
            <person name="Ito Y."/>
            <person name="Iwabuchi A."/>
            <person name="Kamiya K."/>
            <person name="Karasawa W."/>
            <person name="Katagiri S."/>
            <person name="Kikuta A."/>
            <person name="Kobayashi N."/>
            <person name="Kono I."/>
            <person name="Machita K."/>
            <person name="Maehara T."/>
            <person name="Mizuno H."/>
            <person name="Mizubayashi T."/>
            <person name="Mukai Y."/>
            <person name="Nagasaki H."/>
            <person name="Nakashima M."/>
            <person name="Nakama Y."/>
            <person name="Nakamichi Y."/>
            <person name="Nakamura M."/>
            <person name="Namiki N."/>
            <person name="Negishi M."/>
            <person name="Ohta I."/>
            <person name="Ono N."/>
            <person name="Saji S."/>
            <person name="Sakai K."/>
            <person name="Shibata M."/>
            <person name="Shimokawa T."/>
            <person name="Shomura A."/>
            <person name="Song J."/>
            <person name="Takazaki Y."/>
            <person name="Terasawa K."/>
            <person name="Tsuji K."/>
            <person name="Waki K."/>
            <person name="Yamagata H."/>
            <person name="Yamane H."/>
            <person name="Yoshiki S."/>
            <person name="Yoshihara R."/>
            <person name="Yukawa K."/>
            <person name="Zhong H."/>
            <person name="Iwama H."/>
            <person name="Endo T."/>
            <person name="Ito H."/>
            <person name="Hahn J.H."/>
            <person name="Kim H.-I."/>
            <person name="Eun M.-Y."/>
            <person name="Yano M."/>
            <person name="Jiang J."/>
            <person name="Gojobori T."/>
        </authorList>
    </citation>
    <scope>NUCLEOTIDE SEQUENCE [LARGE SCALE GENOMIC DNA]</scope>
    <source>
        <strain>cv. Nipponbare</strain>
    </source>
</reference>
<reference key="2">
    <citation type="journal article" date="2005" name="Nature">
        <title>The map-based sequence of the rice genome.</title>
        <authorList>
            <consortium name="International rice genome sequencing project (IRGSP)"/>
        </authorList>
    </citation>
    <scope>NUCLEOTIDE SEQUENCE [LARGE SCALE GENOMIC DNA]</scope>
    <source>
        <strain>cv. Nipponbare</strain>
    </source>
</reference>
<reference key="3">
    <citation type="journal article" date="2008" name="Nucleic Acids Res.">
        <title>The rice annotation project database (RAP-DB): 2008 update.</title>
        <authorList>
            <consortium name="The rice annotation project (RAP)"/>
        </authorList>
    </citation>
    <scope>GENOME REANNOTATION</scope>
    <source>
        <strain>cv. Nipponbare</strain>
    </source>
</reference>
<reference key="4">
    <citation type="journal article" date="2013" name="Rice">
        <title>Improvement of the Oryza sativa Nipponbare reference genome using next generation sequence and optical map data.</title>
        <authorList>
            <person name="Kawahara Y."/>
            <person name="de la Bastide M."/>
            <person name="Hamilton J.P."/>
            <person name="Kanamori H."/>
            <person name="McCombie W.R."/>
            <person name="Ouyang S."/>
            <person name="Schwartz D.C."/>
            <person name="Tanaka T."/>
            <person name="Wu J."/>
            <person name="Zhou S."/>
            <person name="Childs K.L."/>
            <person name="Davidson R.M."/>
            <person name="Lin H."/>
            <person name="Quesada-Ocampo L."/>
            <person name="Vaillancourt B."/>
            <person name="Sakai H."/>
            <person name="Lee S.S."/>
            <person name="Kim J."/>
            <person name="Numa H."/>
            <person name="Itoh T."/>
            <person name="Buell C.R."/>
            <person name="Matsumoto T."/>
        </authorList>
    </citation>
    <scope>GENOME REANNOTATION</scope>
    <source>
        <strain>cv. Nipponbare</strain>
    </source>
</reference>
<comment type="function">
    <text evidence="1">Catalyzes a base-exchange reaction in which the polar head group of phosphatidylethanolamine (PE) or phosphatidylcholine (PC) is replaced by L-serine.</text>
</comment>
<comment type="catalytic activity">
    <reaction>
        <text>a CDP-1,2-diacyl-sn-glycerol + L-serine = a 1,2-diacyl-sn-glycero-3-phospho-L-serine + CMP + H(+)</text>
        <dbReference type="Rhea" id="RHEA:16913"/>
        <dbReference type="ChEBI" id="CHEBI:15378"/>
        <dbReference type="ChEBI" id="CHEBI:33384"/>
        <dbReference type="ChEBI" id="CHEBI:57262"/>
        <dbReference type="ChEBI" id="CHEBI:58332"/>
        <dbReference type="ChEBI" id="CHEBI:60377"/>
        <dbReference type="EC" id="2.7.8.8"/>
    </reaction>
</comment>
<comment type="pathway">
    <text>Phospholipid metabolism; phosphatidylethanolamine biosynthesis; phosphatidylethanolamine from CDP-diacylglycerol: step 1/2.</text>
</comment>
<comment type="subcellular location">
    <subcellularLocation>
        <location evidence="1">Endoplasmic reticulum membrane</location>
        <topology evidence="4">Multi-pass membrane protein</topology>
    </subcellularLocation>
</comment>
<comment type="similarity">
    <text evidence="4">Belongs to the CDP-alcohol phosphatidyltransferase class-I family.</text>
</comment>
<comment type="sequence caution" evidence="4">
    <conflict type="erroneous gene model prediction">
        <sequence resource="EMBL-CDS" id="BAD82153"/>
    </conflict>
</comment>
<comment type="sequence caution" evidence="4">
    <conflict type="erroneous gene model prediction">
        <sequence resource="EMBL-CDS" id="BAH91236"/>
    </conflict>
</comment>
<sequence length="419" mass="48596">MPVRRRWYPPSSTAAQPSPDGGDVNTDDADACPSSRQQRPPSLPQHSAPIHHRRRVINSIDASGEVMEYGSSNDQRMQDMEIWPSDGGGVEEYDPWTAWLYKPHTVSVLLAGACLLIWASGVLHPEITSSHDKVIPIKRGVWAMIAVFLAYCTLQAPSTILIRPHPAVWRLVHGMAVVYLVALTFLLFQKRDDARQFMKHLHPGLGVELPERSYGSDCRMYVPENPTNRFINIQETLFDEFVIAHVLGWWGKAVMIRNQLLLWVLSVGFELMELTFRHMLPNFNECWWDSIILDIMICNWFGIWAGMHTVRYFDGKTYEWVGLSRQPSIMGKVKRSLCQFTPAKWDKDQWHPFMEPRRFIQVFCLCVGFMTVELNTFFLKFCLWIPPRNPLVVYRLILWWLIAIPAIREYNTYLQDRSS</sequence>
<keyword id="KW-0256">Endoplasmic reticulum</keyword>
<keyword id="KW-0444">Lipid biosynthesis</keyword>
<keyword id="KW-0443">Lipid metabolism</keyword>
<keyword id="KW-0472">Membrane</keyword>
<keyword id="KW-0594">Phospholipid biosynthesis</keyword>
<keyword id="KW-1208">Phospholipid metabolism</keyword>
<keyword id="KW-1185">Reference proteome</keyword>
<keyword id="KW-0808">Transferase</keyword>
<keyword id="KW-0812">Transmembrane</keyword>
<keyword id="KW-1133">Transmembrane helix</keyword>
<protein>
    <recommendedName>
        <fullName>CDP-diacylglycerol--serine O-phosphatidyltransferase 3</fullName>
        <ecNumber>2.7.8.8</ecNumber>
    </recommendedName>
    <alternativeName>
        <fullName>Phosphatidylserine synthase 3</fullName>
    </alternativeName>
</protein>
<accession>Q5N8Q3</accession>
<accession>C7IX41</accession>
<feature type="chain" id="PRO_0000429529" description="CDP-diacylglycerol--serine O-phosphatidyltransferase 3">
    <location>
        <begin position="1"/>
        <end position="419"/>
    </location>
</feature>
<feature type="transmembrane region" description="Helical" evidence="2">
    <location>
        <begin position="103"/>
        <end position="123"/>
    </location>
</feature>
<feature type="transmembrane region" description="Helical" evidence="2">
    <location>
        <begin position="142"/>
        <end position="162"/>
    </location>
</feature>
<feature type="transmembrane region" description="Helical" evidence="2">
    <location>
        <begin position="168"/>
        <end position="188"/>
    </location>
</feature>
<feature type="transmembrane region" description="Helical" evidence="2">
    <location>
        <begin position="260"/>
        <end position="280"/>
    </location>
</feature>
<feature type="transmembrane region" description="Helical" evidence="2">
    <location>
        <begin position="287"/>
        <end position="307"/>
    </location>
</feature>
<feature type="transmembrane region" description="Helical" evidence="2">
    <location>
        <begin position="359"/>
        <end position="379"/>
    </location>
</feature>
<feature type="transmembrane region" description="Helical" evidence="2">
    <location>
        <begin position="384"/>
        <end position="404"/>
    </location>
</feature>
<feature type="region of interest" description="Disordered" evidence="3">
    <location>
        <begin position="1"/>
        <end position="51"/>
    </location>
</feature>
<feature type="compositionally biased region" description="Low complexity" evidence="3">
    <location>
        <begin position="33"/>
        <end position="47"/>
    </location>
</feature>
<proteinExistence type="inferred from homology"/>
<organism>
    <name type="scientific">Oryza sativa subsp. japonica</name>
    <name type="common">Rice</name>
    <dbReference type="NCBI Taxonomy" id="39947"/>
    <lineage>
        <taxon>Eukaryota</taxon>
        <taxon>Viridiplantae</taxon>
        <taxon>Streptophyta</taxon>
        <taxon>Embryophyta</taxon>
        <taxon>Tracheophyta</taxon>
        <taxon>Spermatophyta</taxon>
        <taxon>Magnoliopsida</taxon>
        <taxon>Liliopsida</taxon>
        <taxon>Poales</taxon>
        <taxon>Poaceae</taxon>
        <taxon>BOP clade</taxon>
        <taxon>Oryzoideae</taxon>
        <taxon>Oryzeae</taxon>
        <taxon>Oryzinae</taxon>
        <taxon>Oryza</taxon>
        <taxon>Oryza sativa</taxon>
    </lineage>
</organism>